<evidence type="ECO:0000255" key="1">
    <source>
        <dbReference type="HAMAP-Rule" id="MF_00160"/>
    </source>
</evidence>
<name>SERC_PARD8</name>
<keyword id="KW-0028">Amino-acid biosynthesis</keyword>
<keyword id="KW-0032">Aminotransferase</keyword>
<keyword id="KW-0963">Cytoplasm</keyword>
<keyword id="KW-0663">Pyridoxal phosphate</keyword>
<keyword id="KW-0664">Pyridoxine biosynthesis</keyword>
<keyword id="KW-1185">Reference proteome</keyword>
<keyword id="KW-0718">Serine biosynthesis</keyword>
<keyword id="KW-0808">Transferase</keyword>
<accession>A6L9B7</accession>
<organism>
    <name type="scientific">Parabacteroides distasonis (strain ATCC 8503 / DSM 20701 / CIP 104284 / JCM 5825 / NCTC 11152)</name>
    <dbReference type="NCBI Taxonomy" id="435591"/>
    <lineage>
        <taxon>Bacteria</taxon>
        <taxon>Pseudomonadati</taxon>
        <taxon>Bacteroidota</taxon>
        <taxon>Bacteroidia</taxon>
        <taxon>Bacteroidales</taxon>
        <taxon>Tannerellaceae</taxon>
        <taxon>Parabacteroides</taxon>
    </lineage>
</organism>
<gene>
    <name evidence="1" type="primary">serC</name>
    <name type="ordered locus">BDI_0505</name>
</gene>
<reference key="1">
    <citation type="journal article" date="2007" name="PLoS Biol.">
        <title>Evolution of symbiotic bacteria in the distal human intestine.</title>
        <authorList>
            <person name="Xu J."/>
            <person name="Mahowald M.A."/>
            <person name="Ley R.E."/>
            <person name="Lozupone C.A."/>
            <person name="Hamady M."/>
            <person name="Martens E.C."/>
            <person name="Henrissat B."/>
            <person name="Coutinho P.M."/>
            <person name="Minx P."/>
            <person name="Latreille P."/>
            <person name="Cordum H."/>
            <person name="Van Brunt A."/>
            <person name="Kim K."/>
            <person name="Fulton R.S."/>
            <person name="Fulton L.A."/>
            <person name="Clifton S.W."/>
            <person name="Wilson R.K."/>
            <person name="Knight R.D."/>
            <person name="Gordon J.I."/>
        </authorList>
    </citation>
    <scope>NUCLEOTIDE SEQUENCE [LARGE SCALE GENOMIC DNA]</scope>
    <source>
        <strain>ATCC 8503 / DSM 20701 / CIP 104284 / JCM 5825 / NCTC 11152</strain>
    </source>
</reference>
<dbReference type="EC" id="2.6.1.52" evidence="1"/>
<dbReference type="EMBL" id="CP000140">
    <property type="protein sequence ID" value="ABR42281.1"/>
    <property type="molecule type" value="Genomic_DNA"/>
</dbReference>
<dbReference type="RefSeq" id="WP_005855647.1">
    <property type="nucleotide sequence ID" value="NZ_LR215978.1"/>
</dbReference>
<dbReference type="SMR" id="A6L9B7"/>
<dbReference type="STRING" id="435591.BDI_0505"/>
<dbReference type="PaxDb" id="435591-BDI_0505"/>
<dbReference type="GeneID" id="93525048"/>
<dbReference type="KEGG" id="pdi:BDI_0505"/>
<dbReference type="eggNOG" id="COG1932">
    <property type="taxonomic scope" value="Bacteria"/>
</dbReference>
<dbReference type="HOGENOM" id="CLU_034866_0_2_10"/>
<dbReference type="BioCyc" id="PDIS435591:G1G5A-520-MONOMER"/>
<dbReference type="UniPathway" id="UPA00135">
    <property type="reaction ID" value="UER00197"/>
</dbReference>
<dbReference type="UniPathway" id="UPA00244">
    <property type="reaction ID" value="UER00311"/>
</dbReference>
<dbReference type="Proteomes" id="UP000000566">
    <property type="component" value="Chromosome"/>
</dbReference>
<dbReference type="GO" id="GO:0005737">
    <property type="term" value="C:cytoplasm"/>
    <property type="evidence" value="ECO:0007669"/>
    <property type="project" value="UniProtKB-SubCell"/>
</dbReference>
<dbReference type="GO" id="GO:0004648">
    <property type="term" value="F:O-phospho-L-serine:2-oxoglutarate aminotransferase activity"/>
    <property type="evidence" value="ECO:0007669"/>
    <property type="project" value="UniProtKB-UniRule"/>
</dbReference>
<dbReference type="GO" id="GO:0030170">
    <property type="term" value="F:pyridoxal phosphate binding"/>
    <property type="evidence" value="ECO:0007669"/>
    <property type="project" value="UniProtKB-UniRule"/>
</dbReference>
<dbReference type="GO" id="GO:0006564">
    <property type="term" value="P:L-serine biosynthetic process"/>
    <property type="evidence" value="ECO:0007669"/>
    <property type="project" value="UniProtKB-UniRule"/>
</dbReference>
<dbReference type="GO" id="GO:0008615">
    <property type="term" value="P:pyridoxine biosynthetic process"/>
    <property type="evidence" value="ECO:0007669"/>
    <property type="project" value="UniProtKB-UniRule"/>
</dbReference>
<dbReference type="FunFam" id="3.40.640.10:FF:000010">
    <property type="entry name" value="Phosphoserine aminotransferase"/>
    <property type="match status" value="1"/>
</dbReference>
<dbReference type="FunFam" id="3.90.1150.10:FF:000006">
    <property type="entry name" value="Phosphoserine aminotransferase"/>
    <property type="match status" value="1"/>
</dbReference>
<dbReference type="Gene3D" id="3.90.1150.10">
    <property type="entry name" value="Aspartate Aminotransferase, domain 1"/>
    <property type="match status" value="1"/>
</dbReference>
<dbReference type="Gene3D" id="3.40.640.10">
    <property type="entry name" value="Type I PLP-dependent aspartate aminotransferase-like (Major domain)"/>
    <property type="match status" value="1"/>
</dbReference>
<dbReference type="HAMAP" id="MF_00160">
    <property type="entry name" value="SerC_aminotrans_5"/>
    <property type="match status" value="1"/>
</dbReference>
<dbReference type="InterPro" id="IPR000192">
    <property type="entry name" value="Aminotrans_V_dom"/>
</dbReference>
<dbReference type="InterPro" id="IPR020578">
    <property type="entry name" value="Aminotrans_V_PyrdxlP_BS"/>
</dbReference>
<dbReference type="InterPro" id="IPR022278">
    <property type="entry name" value="Pser_aminoTfrase"/>
</dbReference>
<dbReference type="InterPro" id="IPR015424">
    <property type="entry name" value="PyrdxlP-dep_Trfase"/>
</dbReference>
<dbReference type="InterPro" id="IPR015421">
    <property type="entry name" value="PyrdxlP-dep_Trfase_major"/>
</dbReference>
<dbReference type="InterPro" id="IPR015422">
    <property type="entry name" value="PyrdxlP-dep_Trfase_small"/>
</dbReference>
<dbReference type="NCBIfam" id="NF003764">
    <property type="entry name" value="PRK05355.1"/>
    <property type="match status" value="1"/>
</dbReference>
<dbReference type="NCBIfam" id="TIGR01364">
    <property type="entry name" value="serC_1"/>
    <property type="match status" value="1"/>
</dbReference>
<dbReference type="PANTHER" id="PTHR43247">
    <property type="entry name" value="PHOSPHOSERINE AMINOTRANSFERASE"/>
    <property type="match status" value="1"/>
</dbReference>
<dbReference type="PANTHER" id="PTHR43247:SF1">
    <property type="entry name" value="PHOSPHOSERINE AMINOTRANSFERASE"/>
    <property type="match status" value="1"/>
</dbReference>
<dbReference type="Pfam" id="PF00266">
    <property type="entry name" value="Aminotran_5"/>
    <property type="match status" value="1"/>
</dbReference>
<dbReference type="PIRSF" id="PIRSF000525">
    <property type="entry name" value="SerC"/>
    <property type="match status" value="1"/>
</dbReference>
<dbReference type="SUPFAM" id="SSF53383">
    <property type="entry name" value="PLP-dependent transferases"/>
    <property type="match status" value="1"/>
</dbReference>
<dbReference type="PROSITE" id="PS00595">
    <property type="entry name" value="AA_TRANSFER_CLASS_5"/>
    <property type="match status" value="1"/>
</dbReference>
<feature type="chain" id="PRO_1000058220" description="Phosphoserine aminotransferase">
    <location>
        <begin position="1"/>
        <end position="355"/>
    </location>
</feature>
<feature type="binding site" evidence="1">
    <location>
        <position position="41"/>
    </location>
    <ligand>
        <name>L-glutamate</name>
        <dbReference type="ChEBI" id="CHEBI:29985"/>
    </ligand>
</feature>
<feature type="binding site" evidence="1">
    <location>
        <begin position="75"/>
        <end position="76"/>
    </location>
    <ligand>
        <name>pyridoxal 5'-phosphate</name>
        <dbReference type="ChEBI" id="CHEBI:597326"/>
    </ligand>
</feature>
<feature type="binding site" evidence="1">
    <location>
        <position position="99"/>
    </location>
    <ligand>
        <name>pyridoxal 5'-phosphate</name>
        <dbReference type="ChEBI" id="CHEBI:597326"/>
    </ligand>
</feature>
<feature type="binding site" evidence="1">
    <location>
        <position position="147"/>
    </location>
    <ligand>
        <name>pyridoxal 5'-phosphate</name>
        <dbReference type="ChEBI" id="CHEBI:597326"/>
    </ligand>
</feature>
<feature type="binding site" evidence="1">
    <location>
        <position position="166"/>
    </location>
    <ligand>
        <name>pyridoxal 5'-phosphate</name>
        <dbReference type="ChEBI" id="CHEBI:597326"/>
    </ligand>
</feature>
<feature type="binding site" evidence="1">
    <location>
        <position position="189"/>
    </location>
    <ligand>
        <name>pyridoxal 5'-phosphate</name>
        <dbReference type="ChEBI" id="CHEBI:597326"/>
    </ligand>
</feature>
<feature type="binding site" evidence="1">
    <location>
        <begin position="231"/>
        <end position="232"/>
    </location>
    <ligand>
        <name>pyridoxal 5'-phosphate</name>
        <dbReference type="ChEBI" id="CHEBI:597326"/>
    </ligand>
</feature>
<feature type="modified residue" description="N6-(pyridoxal phosphate)lysine" evidence="1">
    <location>
        <position position="190"/>
    </location>
</feature>
<sequence length="355" mass="39505">MKKHNFYAGPSILSEYTIKNTAAAVENFAGMGLSLLEISHRSKEFVAVNDEARALIKELLDVPAGYEVVFMGGGASMQFCMVPYNLLNKKASYLDTGTWASNAIKEAKLFGEVDVVASSKDKNYTYIPKGYAIADDSDYFHFTSNNTIYGTEMRKDPDVKQRLVCDMSSDIFSRPIDISKYDIIYAGAQKNLAPAGVTLAIVRVDALGHVDRPIPTMLNYATHIKKDSMFNTPPVLPIYAALQTLKWYKEQGGIAAMEKKDLENAAILYDEIDRNKLFRGTVAEEDRSIMNVCFVMNDEYKELEDEFSKYATAAGMVGIKGHRSVGGFRASLYNAMPKSSVEALVACMKEFEKQH</sequence>
<comment type="function">
    <text evidence="1">Catalyzes the reversible conversion of 3-phosphohydroxypyruvate to phosphoserine and of 3-hydroxy-2-oxo-4-phosphonooxybutanoate to phosphohydroxythreonine.</text>
</comment>
<comment type="catalytic activity">
    <reaction evidence="1">
        <text>O-phospho-L-serine + 2-oxoglutarate = 3-phosphooxypyruvate + L-glutamate</text>
        <dbReference type="Rhea" id="RHEA:14329"/>
        <dbReference type="ChEBI" id="CHEBI:16810"/>
        <dbReference type="ChEBI" id="CHEBI:18110"/>
        <dbReference type="ChEBI" id="CHEBI:29985"/>
        <dbReference type="ChEBI" id="CHEBI:57524"/>
        <dbReference type="EC" id="2.6.1.52"/>
    </reaction>
</comment>
<comment type="catalytic activity">
    <reaction evidence="1">
        <text>4-(phosphooxy)-L-threonine + 2-oxoglutarate = (R)-3-hydroxy-2-oxo-4-phosphooxybutanoate + L-glutamate</text>
        <dbReference type="Rhea" id="RHEA:16573"/>
        <dbReference type="ChEBI" id="CHEBI:16810"/>
        <dbReference type="ChEBI" id="CHEBI:29985"/>
        <dbReference type="ChEBI" id="CHEBI:58452"/>
        <dbReference type="ChEBI" id="CHEBI:58538"/>
        <dbReference type="EC" id="2.6.1.52"/>
    </reaction>
</comment>
<comment type="cofactor">
    <cofactor evidence="1">
        <name>pyridoxal 5'-phosphate</name>
        <dbReference type="ChEBI" id="CHEBI:597326"/>
    </cofactor>
    <text evidence="1">Binds 1 pyridoxal phosphate per subunit.</text>
</comment>
<comment type="pathway">
    <text evidence="1">Amino-acid biosynthesis; L-serine biosynthesis; L-serine from 3-phospho-D-glycerate: step 2/3.</text>
</comment>
<comment type="pathway">
    <text evidence="1">Cofactor biosynthesis; pyridoxine 5'-phosphate biosynthesis; pyridoxine 5'-phosphate from D-erythrose 4-phosphate: step 3/5.</text>
</comment>
<comment type="subunit">
    <text evidence="1">Homodimer.</text>
</comment>
<comment type="subcellular location">
    <subcellularLocation>
        <location evidence="1">Cytoplasm</location>
    </subcellularLocation>
</comment>
<comment type="similarity">
    <text evidence="1">Belongs to the class-V pyridoxal-phosphate-dependent aminotransferase family. SerC subfamily.</text>
</comment>
<protein>
    <recommendedName>
        <fullName evidence="1">Phosphoserine aminotransferase</fullName>
        <ecNumber evidence="1">2.6.1.52</ecNumber>
    </recommendedName>
    <alternativeName>
        <fullName evidence="1">Phosphohydroxythreonine aminotransferase</fullName>
        <shortName evidence="1">PSAT</shortName>
    </alternativeName>
</protein>
<proteinExistence type="inferred from homology"/>